<feature type="chain" id="PRO_1000186213" description="Purine nucleoside phosphorylase DeoD-type">
    <location>
        <begin position="1"/>
        <end position="234"/>
    </location>
</feature>
<feature type="active site" description="Proton donor" evidence="2">
    <location>
        <position position="204"/>
    </location>
</feature>
<feature type="binding site" evidence="1">
    <location>
        <position position="4"/>
    </location>
    <ligand>
        <name>a purine D-ribonucleoside</name>
        <dbReference type="ChEBI" id="CHEBI:142355"/>
        <note>ligand shared between dimeric partners</note>
    </ligand>
</feature>
<feature type="binding site" description="in other chain" evidence="1">
    <location>
        <position position="20"/>
    </location>
    <ligand>
        <name>phosphate</name>
        <dbReference type="ChEBI" id="CHEBI:43474"/>
        <note>ligand shared between dimeric partners</note>
    </ligand>
</feature>
<feature type="binding site" description="in other chain" evidence="1">
    <location>
        <position position="24"/>
    </location>
    <ligand>
        <name>phosphate</name>
        <dbReference type="ChEBI" id="CHEBI:43474"/>
        <note>ligand shared between dimeric partners</note>
    </ligand>
</feature>
<feature type="binding site" evidence="1">
    <location>
        <position position="43"/>
    </location>
    <ligand>
        <name>phosphate</name>
        <dbReference type="ChEBI" id="CHEBI:43474"/>
        <note>ligand shared between dimeric partners</note>
    </ligand>
</feature>
<feature type="binding site" description="in other chain" evidence="1">
    <location>
        <begin position="87"/>
        <end position="90"/>
    </location>
    <ligand>
        <name>phosphate</name>
        <dbReference type="ChEBI" id="CHEBI:43474"/>
        <note>ligand shared between dimeric partners</note>
    </ligand>
</feature>
<feature type="binding site" description="in other chain" evidence="1">
    <location>
        <position position="162"/>
    </location>
    <ligand>
        <name>a purine D-ribonucleoside</name>
        <dbReference type="ChEBI" id="CHEBI:142355"/>
        <note>ligand shared between dimeric partners</note>
    </ligand>
</feature>
<feature type="binding site" description="in other chain" evidence="1">
    <location>
        <begin position="179"/>
        <end position="181"/>
    </location>
    <ligand>
        <name>a purine D-ribonucleoside</name>
        <dbReference type="ChEBI" id="CHEBI:142355"/>
        <note>ligand shared between dimeric partners</note>
    </ligand>
</feature>
<feature type="binding site" description="in other chain" evidence="1">
    <location>
        <begin position="203"/>
        <end position="204"/>
    </location>
    <ligand>
        <name>a purine D-ribonucleoside</name>
        <dbReference type="ChEBI" id="CHEBI:142355"/>
        <note>ligand shared between dimeric partners</note>
    </ligand>
</feature>
<feature type="site" description="Important for catalytic activity" evidence="2">
    <location>
        <position position="217"/>
    </location>
</feature>
<evidence type="ECO:0000250" key="1">
    <source>
        <dbReference type="UniProtKB" id="P50389"/>
    </source>
</evidence>
<evidence type="ECO:0000255" key="2">
    <source>
        <dbReference type="HAMAP-Rule" id="MF_01627"/>
    </source>
</evidence>
<sequence>MTIHIGARPDQIAETVLMPGDPYRARWAAQTFLDGAELVNEVRGMLGFTGTYKGNRVTIQGSGMGMPSLSIYANELISSYNAQTLIRIGSCGGMQPHVAVRDVIIAMSATTITSPSSGIFREVNFAPTAHYDLLAAAVTAAKAKGTRTHVGGIYSSDVFYAERPDLDEQMVRHGILGVEMEAAELYTLAARHNRRALAILTVSDHLQTGEALPAEDREQTFGDMVEIALEAAFA</sequence>
<comment type="function">
    <text evidence="2">Catalyzes the reversible phosphorolytic breakdown of the N-glycosidic bond in the beta-(deoxy)ribonucleoside molecules, with the formation of the corresponding free purine bases and pentose-1-phosphate.</text>
</comment>
<comment type="catalytic activity">
    <reaction evidence="2">
        <text>a purine D-ribonucleoside + phosphate = a purine nucleobase + alpha-D-ribose 1-phosphate</text>
        <dbReference type="Rhea" id="RHEA:19805"/>
        <dbReference type="ChEBI" id="CHEBI:26386"/>
        <dbReference type="ChEBI" id="CHEBI:43474"/>
        <dbReference type="ChEBI" id="CHEBI:57720"/>
        <dbReference type="ChEBI" id="CHEBI:142355"/>
        <dbReference type="EC" id="2.4.2.1"/>
    </reaction>
</comment>
<comment type="catalytic activity">
    <reaction evidence="2">
        <text>a purine 2'-deoxy-D-ribonucleoside + phosphate = a purine nucleobase + 2-deoxy-alpha-D-ribose 1-phosphate</text>
        <dbReference type="Rhea" id="RHEA:36431"/>
        <dbReference type="ChEBI" id="CHEBI:26386"/>
        <dbReference type="ChEBI" id="CHEBI:43474"/>
        <dbReference type="ChEBI" id="CHEBI:57259"/>
        <dbReference type="ChEBI" id="CHEBI:142361"/>
        <dbReference type="EC" id="2.4.2.1"/>
    </reaction>
</comment>
<comment type="subunit">
    <text evidence="2">Homohexamer; trimer of homodimers.</text>
</comment>
<comment type="similarity">
    <text evidence="2">Belongs to the PNP/UDP phosphorylase family.</text>
</comment>
<keyword id="KW-0328">Glycosyltransferase</keyword>
<keyword id="KW-1185">Reference proteome</keyword>
<keyword id="KW-0808">Transferase</keyword>
<dbReference type="EC" id="2.4.2.1" evidence="2"/>
<dbReference type="EMBL" id="CP000362">
    <property type="protein sequence ID" value="ABG31261.1"/>
    <property type="molecule type" value="Genomic_DNA"/>
</dbReference>
<dbReference type="RefSeq" id="WP_011567881.1">
    <property type="nucleotide sequence ID" value="NC_008209.1"/>
</dbReference>
<dbReference type="SMR" id="Q169T2"/>
<dbReference type="STRING" id="375451.RD1_1634"/>
<dbReference type="KEGG" id="rde:RD1_1634"/>
<dbReference type="eggNOG" id="COG0813">
    <property type="taxonomic scope" value="Bacteria"/>
</dbReference>
<dbReference type="HOGENOM" id="CLU_068457_2_0_5"/>
<dbReference type="OrthoDB" id="9782889at2"/>
<dbReference type="Proteomes" id="UP000007029">
    <property type="component" value="Chromosome"/>
</dbReference>
<dbReference type="GO" id="GO:0005829">
    <property type="term" value="C:cytosol"/>
    <property type="evidence" value="ECO:0007669"/>
    <property type="project" value="TreeGrafter"/>
</dbReference>
<dbReference type="GO" id="GO:0004731">
    <property type="term" value="F:purine-nucleoside phosphorylase activity"/>
    <property type="evidence" value="ECO:0007669"/>
    <property type="project" value="UniProtKB-UniRule"/>
</dbReference>
<dbReference type="GO" id="GO:0006152">
    <property type="term" value="P:purine nucleoside catabolic process"/>
    <property type="evidence" value="ECO:0007669"/>
    <property type="project" value="TreeGrafter"/>
</dbReference>
<dbReference type="CDD" id="cd09006">
    <property type="entry name" value="PNP_EcPNPI-like"/>
    <property type="match status" value="1"/>
</dbReference>
<dbReference type="Gene3D" id="3.40.50.1580">
    <property type="entry name" value="Nucleoside phosphorylase domain"/>
    <property type="match status" value="1"/>
</dbReference>
<dbReference type="HAMAP" id="MF_01627">
    <property type="entry name" value="Pur_nucleosid_phosp"/>
    <property type="match status" value="1"/>
</dbReference>
<dbReference type="InterPro" id="IPR004402">
    <property type="entry name" value="DeoD-type"/>
</dbReference>
<dbReference type="InterPro" id="IPR018016">
    <property type="entry name" value="Nucleoside_phosphorylase_CS"/>
</dbReference>
<dbReference type="InterPro" id="IPR000845">
    <property type="entry name" value="Nucleoside_phosphorylase_d"/>
</dbReference>
<dbReference type="InterPro" id="IPR035994">
    <property type="entry name" value="Nucleoside_phosphorylase_sf"/>
</dbReference>
<dbReference type="NCBIfam" id="TIGR00107">
    <property type="entry name" value="deoD"/>
    <property type="match status" value="1"/>
</dbReference>
<dbReference type="NCBIfam" id="NF004489">
    <property type="entry name" value="PRK05819.1"/>
    <property type="match status" value="1"/>
</dbReference>
<dbReference type="PANTHER" id="PTHR43691:SF11">
    <property type="entry name" value="FI09636P-RELATED"/>
    <property type="match status" value="1"/>
</dbReference>
<dbReference type="PANTHER" id="PTHR43691">
    <property type="entry name" value="URIDINE PHOSPHORYLASE"/>
    <property type="match status" value="1"/>
</dbReference>
<dbReference type="Pfam" id="PF01048">
    <property type="entry name" value="PNP_UDP_1"/>
    <property type="match status" value="1"/>
</dbReference>
<dbReference type="SUPFAM" id="SSF53167">
    <property type="entry name" value="Purine and uridine phosphorylases"/>
    <property type="match status" value="1"/>
</dbReference>
<dbReference type="PROSITE" id="PS01232">
    <property type="entry name" value="PNP_UDP_1"/>
    <property type="match status" value="1"/>
</dbReference>
<name>DEOD_ROSDO</name>
<protein>
    <recommendedName>
        <fullName evidence="2">Purine nucleoside phosphorylase DeoD-type</fullName>
        <shortName evidence="2">PNP</shortName>
        <ecNumber evidence="2">2.4.2.1</ecNumber>
    </recommendedName>
</protein>
<accession>Q169T2</accession>
<gene>
    <name evidence="2" type="primary">deoD</name>
    <name type="ordered locus">RD1_1634</name>
</gene>
<reference key="1">
    <citation type="journal article" date="2007" name="J. Bacteriol.">
        <title>The complete genome sequence of Roseobacter denitrificans reveals a mixotrophic rather than photosynthetic metabolism.</title>
        <authorList>
            <person name="Swingley W.D."/>
            <person name="Sadekar S."/>
            <person name="Mastrian S.D."/>
            <person name="Matthies H.J."/>
            <person name="Hao J."/>
            <person name="Ramos H."/>
            <person name="Acharya C.R."/>
            <person name="Conrad A.L."/>
            <person name="Taylor H.L."/>
            <person name="Dejesa L.C."/>
            <person name="Shah M.K."/>
            <person name="O'Huallachain M.E."/>
            <person name="Lince M.T."/>
            <person name="Blankenship R.E."/>
            <person name="Beatty J.T."/>
            <person name="Touchman J.W."/>
        </authorList>
    </citation>
    <scope>NUCLEOTIDE SEQUENCE [LARGE SCALE GENOMIC DNA]</scope>
    <source>
        <strain>ATCC 33942 / OCh 114</strain>
    </source>
</reference>
<organism>
    <name type="scientific">Roseobacter denitrificans (strain ATCC 33942 / OCh 114)</name>
    <name type="common">Erythrobacter sp. (strain OCh 114)</name>
    <name type="synonym">Roseobacter denitrificans</name>
    <dbReference type="NCBI Taxonomy" id="375451"/>
    <lineage>
        <taxon>Bacteria</taxon>
        <taxon>Pseudomonadati</taxon>
        <taxon>Pseudomonadota</taxon>
        <taxon>Alphaproteobacteria</taxon>
        <taxon>Rhodobacterales</taxon>
        <taxon>Roseobacteraceae</taxon>
        <taxon>Roseobacter</taxon>
    </lineage>
</organism>
<proteinExistence type="inferred from homology"/>